<proteinExistence type="evidence at protein level"/>
<feature type="initiator methionine" description="Removed" evidence="14">
    <location>
        <position position="1"/>
    </location>
</feature>
<feature type="chain" id="PRO_0000055022" description="ATP-dependent RNA helicase DDX19B">
    <location>
        <begin position="2"/>
        <end position="479"/>
    </location>
</feature>
<feature type="domain" description="Helicase ATP-binding" evidence="1">
    <location>
        <begin position="125"/>
        <end position="295"/>
    </location>
</feature>
<feature type="domain" description="Helicase C-terminal" evidence="2">
    <location>
        <begin position="306"/>
        <end position="474"/>
    </location>
</feature>
<feature type="region of interest" description="N-terminal lobe">
    <location>
        <begin position="2"/>
        <end position="300"/>
    </location>
</feature>
<feature type="region of interest" description="Disordered" evidence="3">
    <location>
        <begin position="34"/>
        <end position="54"/>
    </location>
</feature>
<feature type="region of interest" description="N-terminal helix">
    <location>
        <begin position="55"/>
        <end position="68"/>
    </location>
</feature>
<feature type="region of interest" description="C-terminal lobe">
    <location>
        <begin position="301"/>
        <end position="479"/>
    </location>
</feature>
<feature type="short sequence motif" description="Q motif">
    <location>
        <begin position="92"/>
        <end position="120"/>
    </location>
</feature>
<feature type="short sequence motif" description="DEAD box">
    <location>
        <begin position="242"/>
        <end position="245"/>
    </location>
</feature>
<feature type="binding site">
    <location>
        <position position="119"/>
    </location>
    <ligand>
        <name>ATP</name>
        <dbReference type="ChEBI" id="CHEBI:30616"/>
    </ligand>
</feature>
<feature type="binding site">
    <location>
        <begin position="138"/>
        <end position="145"/>
    </location>
    <ligand>
        <name>ATP</name>
        <dbReference type="ChEBI" id="CHEBI:30616"/>
    </ligand>
</feature>
<feature type="binding site">
    <location>
        <position position="429"/>
    </location>
    <ligand>
        <name>ATP</name>
        <dbReference type="ChEBI" id="CHEBI:30616"/>
    </ligand>
</feature>
<feature type="binding site">
    <location>
        <position position="432"/>
    </location>
    <ligand>
        <name>ATP</name>
        <dbReference type="ChEBI" id="CHEBI:30616"/>
    </ligand>
</feature>
<feature type="modified residue" description="N-acetylalanine" evidence="14">
    <location>
        <position position="2"/>
    </location>
</feature>
<feature type="splice variant" id="VSP_041347" description="In isoform 3." evidence="9 10 11">
    <location>
        <begin position="1"/>
        <end position="109"/>
    </location>
</feature>
<feature type="splice variant" id="VSP_044727" description="In isoform 4." evidence="10">
    <original>MATDSWALAVDEQEAAAES</original>
    <variation>MAGAAGRVQDRALRRFPITLPVGD</variation>
    <location>
        <begin position="1"/>
        <end position="19"/>
    </location>
</feature>
<feature type="splice variant" id="VSP_015239" description="In isoform 2 and isoform 4." evidence="8 10 12">
    <location>
        <begin position="100"/>
        <end position="130"/>
    </location>
</feature>
<feature type="sequence variant" id="VAR_052160" description="In dbSNP:rs34607244.">
    <original>V</original>
    <variation>L</variation>
    <location>
        <position position="149"/>
    </location>
</feature>
<feature type="mutagenesis site" description="Impairs interaction with NUP214 and RNA." evidence="6">
    <original>D</original>
    <variation>R</variation>
    <location>
        <position position="223"/>
    </location>
</feature>
<feature type="mutagenesis site" description="Loss of activity." evidence="4">
    <original>E</original>
    <variation>Q</variation>
    <location>
        <position position="243"/>
    </location>
</feature>
<feature type="mutagenesis site" description="Impairs interaction with NUP214." evidence="6">
    <original>I</original>
    <variation>A</variation>
    <location>
        <position position="258"/>
    </location>
</feature>
<feature type="mutagenesis site" description="Impairs interaction with NUP214." evidence="6">
    <original>R</original>
    <variation>D</variation>
    <location>
        <position position="259"/>
    </location>
</feature>
<feature type="mutagenesis site" description="Impairs interaction with NUP214." evidence="6">
    <original>R</original>
    <variation>A</variation>
    <location>
        <position position="262"/>
    </location>
</feature>
<feature type="sequence conflict" description="In Ref. 4; CAG33496." evidence="13" ref="4">
    <original>A</original>
    <variation>V</variation>
    <location>
        <position position="128"/>
    </location>
</feature>
<feature type="sequence conflict" description="In Ref. 5; BAG63488." evidence="13" ref="5">
    <original>N</original>
    <variation>Y</variation>
    <location>
        <position position="201"/>
    </location>
</feature>
<feature type="sequence conflict" description="In Ref. 4; CAG33496." evidence="13" ref="4">
    <original>I</original>
    <variation>T</variation>
    <location>
        <position position="331"/>
    </location>
</feature>
<feature type="sequence conflict" description="In Ref. 4; CAG38540." evidence="13" ref="4">
    <original>M</original>
    <variation>V</variation>
    <location>
        <position position="367"/>
    </location>
</feature>
<feature type="helix" evidence="19">
    <location>
        <begin position="56"/>
        <end position="66"/>
    </location>
</feature>
<feature type="helix" evidence="17">
    <location>
        <begin position="67"/>
        <end position="70"/>
    </location>
</feature>
<feature type="helix" evidence="16">
    <location>
        <begin position="76"/>
        <end position="80"/>
    </location>
</feature>
<feature type="strand" evidence="15">
    <location>
        <begin position="82"/>
        <end position="86"/>
    </location>
</feature>
<feature type="strand" evidence="19">
    <location>
        <begin position="92"/>
        <end position="94"/>
    </location>
</feature>
<feature type="helix" evidence="16">
    <location>
        <begin position="95"/>
        <end position="97"/>
    </location>
</feature>
<feature type="helix" evidence="16">
    <location>
        <begin position="101"/>
        <end position="109"/>
    </location>
</feature>
<feature type="helix" evidence="16">
    <location>
        <begin position="117"/>
        <end position="127"/>
    </location>
</feature>
<feature type="strand" evidence="16">
    <location>
        <begin position="128"/>
        <end position="130"/>
    </location>
</feature>
<feature type="strand" evidence="16">
    <location>
        <begin position="134"/>
        <end position="137"/>
    </location>
</feature>
<feature type="helix" evidence="16">
    <location>
        <begin position="144"/>
        <end position="155"/>
    </location>
</feature>
<feature type="strand" evidence="16">
    <location>
        <begin position="165"/>
        <end position="168"/>
    </location>
</feature>
<feature type="helix" evidence="16">
    <location>
        <begin position="172"/>
        <end position="185"/>
    </location>
</feature>
<feature type="turn" evidence="16">
    <location>
        <begin position="186"/>
        <end position="188"/>
    </location>
</feature>
<feature type="strand" evidence="16">
    <location>
        <begin position="194"/>
        <end position="197"/>
    </location>
</feature>
<feature type="strand" evidence="16">
    <location>
        <begin position="212"/>
        <end position="216"/>
    </location>
</feature>
<feature type="helix" evidence="16">
    <location>
        <begin position="218"/>
        <end position="225"/>
    </location>
</feature>
<feature type="turn" evidence="19">
    <location>
        <begin position="226"/>
        <end position="228"/>
    </location>
</feature>
<feature type="helix" evidence="16">
    <location>
        <begin position="233"/>
        <end position="235"/>
    </location>
</feature>
<feature type="strand" evidence="16">
    <location>
        <begin position="238"/>
        <end position="242"/>
    </location>
</feature>
<feature type="helix" evidence="16">
    <location>
        <begin position="244"/>
        <end position="248"/>
    </location>
</feature>
<feature type="turn" evidence="16">
    <location>
        <begin position="250"/>
        <end position="253"/>
    </location>
</feature>
<feature type="helix" evidence="16">
    <location>
        <begin position="254"/>
        <end position="262"/>
    </location>
</feature>
<feature type="strand" evidence="16">
    <location>
        <begin position="269"/>
        <end position="275"/>
    </location>
</feature>
<feature type="helix" evidence="16">
    <location>
        <begin position="279"/>
        <end position="288"/>
    </location>
</feature>
<feature type="strand" evidence="16">
    <location>
        <begin position="289"/>
        <end position="291"/>
    </location>
</feature>
<feature type="strand" evidence="16">
    <location>
        <begin position="293"/>
        <end position="295"/>
    </location>
</feature>
<feature type="helix" evidence="16">
    <location>
        <begin position="299"/>
        <end position="301"/>
    </location>
</feature>
<feature type="helix" evidence="15">
    <location>
        <begin position="304"/>
        <end position="306"/>
    </location>
</feature>
<feature type="strand" evidence="16">
    <location>
        <begin position="307"/>
        <end position="313"/>
    </location>
</feature>
<feature type="helix" evidence="16">
    <location>
        <begin position="317"/>
        <end position="331"/>
    </location>
</feature>
<feature type="strand" evidence="16">
    <location>
        <begin position="332"/>
        <end position="339"/>
    </location>
</feature>
<feature type="helix" evidence="16">
    <location>
        <begin position="343"/>
        <end position="355"/>
    </location>
</feature>
<feature type="strand" evidence="16">
    <location>
        <begin position="361"/>
        <end position="363"/>
    </location>
</feature>
<feature type="helix" evidence="16">
    <location>
        <begin position="369"/>
        <end position="380"/>
    </location>
</feature>
<feature type="strand" evidence="16">
    <location>
        <begin position="385"/>
        <end position="389"/>
    </location>
</feature>
<feature type="helix" evidence="16">
    <location>
        <begin position="391"/>
        <end position="393"/>
    </location>
</feature>
<feature type="strand" evidence="17">
    <location>
        <begin position="394"/>
        <end position="396"/>
    </location>
</feature>
<feature type="strand" evidence="16">
    <location>
        <begin position="402"/>
        <end position="409"/>
    </location>
</feature>
<feature type="strand" evidence="16">
    <location>
        <begin position="414"/>
        <end position="418"/>
    </location>
</feature>
<feature type="helix" evidence="16">
    <location>
        <begin position="420"/>
        <end position="427"/>
    </location>
</feature>
<feature type="strand" evidence="18">
    <location>
        <begin position="429"/>
        <end position="431"/>
    </location>
</feature>
<feature type="strand" evidence="16">
    <location>
        <begin position="437"/>
        <end position="443"/>
    </location>
</feature>
<feature type="helix" evidence="16">
    <location>
        <begin position="446"/>
        <end position="459"/>
    </location>
</feature>
<feature type="helix" evidence="19">
    <location>
        <begin position="471"/>
        <end position="478"/>
    </location>
</feature>
<protein>
    <recommendedName>
        <fullName>ATP-dependent RNA helicase DDX19B</fullName>
        <ecNumber evidence="4">3.6.4.13</ecNumber>
    </recommendedName>
    <alternativeName>
        <fullName>DEAD box RNA helicase DEAD5</fullName>
    </alternativeName>
    <alternativeName>
        <fullName>DEAD box protein 19B</fullName>
    </alternativeName>
</protein>
<sequence>MATDSWALAVDEQEAAAESLSNLHLKEEKIKPDTNGAVVKTNANAEKTDEEEKEDRAAQSLLNKLIRSNLVDNTNQVEVLQRDPNSPLYSVKSFEELRLKPQLLQGVYAMGFNRPSKIQENALPLMLAEPPQNLIAQSQSGTGKTAAFVLAMLSQVEPANKYPQCLCLSPTYELALQTGKVIEQMGKFYPELKLAYAVRGNKLERGQKISEQIVIGTPGTVLDWCSKLKFIDPKKIKVFVLDEADVMIATQGHQDQSIRIQRMLPRNCQMLLFSATFEDSVWKFAQKVVPDPNVIKLKREEETLDTIKQYYVLCSSRDEKFQALCNLYGAITIAQAMIFCHTRKTASWLAAELSKEGHQVALLSGEMMVEQRAAVIERFREGKEKVLVTTNVCARGIDVEQVSVVINFDLPVDKDGNPDNETYLHRIGRTGRFGKRGLAVNMVDSKHSMNILNRIQEHFNKKIERLDTDDLDEIEKIAN</sequence>
<evidence type="ECO:0000255" key="1">
    <source>
        <dbReference type="PROSITE-ProRule" id="PRU00541"/>
    </source>
</evidence>
<evidence type="ECO:0000255" key="2">
    <source>
        <dbReference type="PROSITE-ProRule" id="PRU00542"/>
    </source>
</evidence>
<evidence type="ECO:0000256" key="3">
    <source>
        <dbReference type="SAM" id="MobiDB-lite"/>
    </source>
</evidence>
<evidence type="ECO:0000269" key="4">
    <source>
    </source>
</evidence>
<evidence type="ECO:0000269" key="5">
    <source>
    </source>
</evidence>
<evidence type="ECO:0000269" key="6">
    <source>
    </source>
</evidence>
<evidence type="ECO:0000269" key="7">
    <source>
    </source>
</evidence>
<evidence type="ECO:0000303" key="8">
    <source>
    </source>
</evidence>
<evidence type="ECO:0000303" key="9">
    <source>
    </source>
</evidence>
<evidence type="ECO:0000303" key="10">
    <source>
    </source>
</evidence>
<evidence type="ECO:0000303" key="11">
    <source>
    </source>
</evidence>
<evidence type="ECO:0000303" key="12">
    <source ref="4"/>
</evidence>
<evidence type="ECO:0000305" key="13"/>
<evidence type="ECO:0007744" key="14">
    <source>
    </source>
</evidence>
<evidence type="ECO:0007829" key="15">
    <source>
        <dbReference type="PDB" id="3EWS"/>
    </source>
</evidence>
<evidence type="ECO:0007829" key="16">
    <source>
        <dbReference type="PDB" id="3FHT"/>
    </source>
</evidence>
<evidence type="ECO:0007829" key="17">
    <source>
        <dbReference type="PDB" id="3G0H"/>
    </source>
</evidence>
<evidence type="ECO:0007829" key="18">
    <source>
        <dbReference type="PDB" id="6B4J"/>
    </source>
</evidence>
<evidence type="ECO:0007829" key="19">
    <source>
        <dbReference type="PDB" id="6B4K"/>
    </source>
</evidence>
<reference key="1">
    <citation type="journal article" date="1999" name="EMBO J.">
        <title>Dbp5, a DEAD-box protein required for mRNA export, is recruited to the cytoplasmic fibrils of nuclear pore complex via a conserved interaction with CAN/Nup159p.</title>
        <authorList>
            <person name="Schmitt C."/>
            <person name="von Kobbe C."/>
            <person name="Bachi A."/>
            <person name="Pante N."/>
            <person name="Rodrigues J.P."/>
            <person name="Boscheron C."/>
            <person name="Rigaut G."/>
            <person name="Wilm M."/>
            <person name="Seraphin B."/>
            <person name="Carmo-Fonseca M."/>
            <person name="Izaurralde E."/>
        </authorList>
    </citation>
    <scope>NUCLEOTIDE SEQUENCE [MRNA] (ISOFORM 1)</scope>
    <scope>FUNCTION</scope>
    <scope>CATALYTIC ACTIVITY</scope>
    <scope>ASSOCIATION WITH NUCLEAR PORE COMPLEX</scope>
    <scope>INTERACTION WITH NUP214</scope>
    <scope>SUBCELLULAR LOCATION</scope>
    <scope>MUTAGENESIS OF GLU-243</scope>
</reference>
<reference key="2">
    <citation type="journal article" date="2002" name="Reprod. Fertil. Dev.">
        <title>Identification and characterization of a gene coding a novel isoform of DEAD-box protein.</title>
        <authorList>
            <person name="Yin L."/>
            <person name="Li J."/>
            <person name="Zhu H."/>
            <person name="Lin M."/>
            <person name="Cheng L."/>
            <person name="Wang Y."/>
            <person name="Zhou Z."/>
            <person name="Sha J."/>
        </authorList>
    </citation>
    <scope>NUCLEOTIDE SEQUENCE [MRNA] (ISOFORM 3)</scope>
    <source>
        <tissue>Testis</tissue>
    </source>
</reference>
<reference key="3">
    <citation type="journal article" date="2001" name="Genome Res.">
        <title>Towards a catalog of human genes and proteins: sequencing and analysis of 500 novel complete protein coding human cDNAs.</title>
        <authorList>
            <person name="Wiemann S."/>
            <person name="Weil B."/>
            <person name="Wellenreuther R."/>
            <person name="Gassenhuber J."/>
            <person name="Glassl S."/>
            <person name="Ansorge W."/>
            <person name="Boecher M."/>
            <person name="Bloecker H."/>
            <person name="Bauersachs S."/>
            <person name="Blum H."/>
            <person name="Lauber J."/>
            <person name="Duesterhoeft A."/>
            <person name="Beyer A."/>
            <person name="Koehrer K."/>
            <person name="Strack N."/>
            <person name="Mewes H.-W."/>
            <person name="Ottenwaelder B."/>
            <person name="Obermaier B."/>
            <person name="Tampe J."/>
            <person name="Heubner D."/>
            <person name="Wambutt R."/>
            <person name="Korn B."/>
            <person name="Klein M."/>
            <person name="Poustka A."/>
        </authorList>
    </citation>
    <scope>NUCLEOTIDE SEQUENCE [LARGE SCALE MRNA] (ISOFORM 2)</scope>
    <source>
        <tissue>Brain</tissue>
    </source>
</reference>
<reference key="4">
    <citation type="submission" date="2004-06" db="EMBL/GenBank/DDBJ databases">
        <title>Cloning of human full open reading frames in Gateway(TM) system entry vector (pDONR201).</title>
        <authorList>
            <person name="Ebert L."/>
            <person name="Schick M."/>
            <person name="Neubert P."/>
            <person name="Schatten R."/>
            <person name="Henze S."/>
            <person name="Korn B."/>
        </authorList>
    </citation>
    <scope>NUCLEOTIDE SEQUENCE [LARGE SCALE MRNA] (ISOFORMS 1 AND 2)</scope>
</reference>
<reference key="5">
    <citation type="journal article" date="2004" name="Nat. Genet.">
        <title>Complete sequencing and characterization of 21,243 full-length human cDNAs.</title>
        <authorList>
            <person name="Ota T."/>
            <person name="Suzuki Y."/>
            <person name="Nishikawa T."/>
            <person name="Otsuki T."/>
            <person name="Sugiyama T."/>
            <person name="Irie R."/>
            <person name="Wakamatsu A."/>
            <person name="Hayashi K."/>
            <person name="Sato H."/>
            <person name="Nagai K."/>
            <person name="Kimura K."/>
            <person name="Makita H."/>
            <person name="Sekine M."/>
            <person name="Obayashi M."/>
            <person name="Nishi T."/>
            <person name="Shibahara T."/>
            <person name="Tanaka T."/>
            <person name="Ishii S."/>
            <person name="Yamamoto J."/>
            <person name="Saito K."/>
            <person name="Kawai Y."/>
            <person name="Isono Y."/>
            <person name="Nakamura Y."/>
            <person name="Nagahari K."/>
            <person name="Murakami K."/>
            <person name="Yasuda T."/>
            <person name="Iwayanagi T."/>
            <person name="Wagatsuma M."/>
            <person name="Shiratori A."/>
            <person name="Sudo H."/>
            <person name="Hosoiri T."/>
            <person name="Kaku Y."/>
            <person name="Kodaira H."/>
            <person name="Kondo H."/>
            <person name="Sugawara M."/>
            <person name="Takahashi M."/>
            <person name="Kanda K."/>
            <person name="Yokoi T."/>
            <person name="Furuya T."/>
            <person name="Kikkawa E."/>
            <person name="Omura Y."/>
            <person name="Abe K."/>
            <person name="Kamihara K."/>
            <person name="Katsuta N."/>
            <person name="Sato K."/>
            <person name="Tanikawa M."/>
            <person name="Yamazaki M."/>
            <person name="Ninomiya K."/>
            <person name="Ishibashi T."/>
            <person name="Yamashita H."/>
            <person name="Murakawa K."/>
            <person name="Fujimori K."/>
            <person name="Tanai H."/>
            <person name="Kimata M."/>
            <person name="Watanabe M."/>
            <person name="Hiraoka S."/>
            <person name="Chiba Y."/>
            <person name="Ishida S."/>
            <person name="Ono Y."/>
            <person name="Takiguchi S."/>
            <person name="Watanabe S."/>
            <person name="Yosida M."/>
            <person name="Hotuta T."/>
            <person name="Kusano J."/>
            <person name="Kanehori K."/>
            <person name="Takahashi-Fujii A."/>
            <person name="Hara H."/>
            <person name="Tanase T.-O."/>
            <person name="Nomura Y."/>
            <person name="Togiya S."/>
            <person name="Komai F."/>
            <person name="Hara R."/>
            <person name="Takeuchi K."/>
            <person name="Arita M."/>
            <person name="Imose N."/>
            <person name="Musashino K."/>
            <person name="Yuuki H."/>
            <person name="Oshima A."/>
            <person name="Sasaki N."/>
            <person name="Aotsuka S."/>
            <person name="Yoshikawa Y."/>
            <person name="Matsunawa H."/>
            <person name="Ichihara T."/>
            <person name="Shiohata N."/>
            <person name="Sano S."/>
            <person name="Moriya S."/>
            <person name="Momiyama H."/>
            <person name="Satoh N."/>
            <person name="Takami S."/>
            <person name="Terashima Y."/>
            <person name="Suzuki O."/>
            <person name="Nakagawa S."/>
            <person name="Senoh A."/>
            <person name="Mizoguchi H."/>
            <person name="Goto Y."/>
            <person name="Shimizu F."/>
            <person name="Wakebe H."/>
            <person name="Hishigaki H."/>
            <person name="Watanabe T."/>
            <person name="Sugiyama A."/>
            <person name="Takemoto M."/>
            <person name="Kawakami B."/>
            <person name="Yamazaki M."/>
            <person name="Watanabe K."/>
            <person name="Kumagai A."/>
            <person name="Itakura S."/>
            <person name="Fukuzumi Y."/>
            <person name="Fujimori Y."/>
            <person name="Komiyama M."/>
            <person name="Tashiro H."/>
            <person name="Tanigami A."/>
            <person name="Fujiwara T."/>
            <person name="Ono T."/>
            <person name="Yamada K."/>
            <person name="Fujii Y."/>
            <person name="Ozaki K."/>
            <person name="Hirao M."/>
            <person name="Ohmori Y."/>
            <person name="Kawabata A."/>
            <person name="Hikiji T."/>
            <person name="Kobatake N."/>
            <person name="Inagaki H."/>
            <person name="Ikema Y."/>
            <person name="Okamoto S."/>
            <person name="Okitani R."/>
            <person name="Kawakami T."/>
            <person name="Noguchi S."/>
            <person name="Itoh T."/>
            <person name="Shigeta K."/>
            <person name="Senba T."/>
            <person name="Matsumura K."/>
            <person name="Nakajima Y."/>
            <person name="Mizuno T."/>
            <person name="Morinaga M."/>
            <person name="Sasaki M."/>
            <person name="Togashi T."/>
            <person name="Oyama M."/>
            <person name="Hata H."/>
            <person name="Watanabe M."/>
            <person name="Komatsu T."/>
            <person name="Mizushima-Sugano J."/>
            <person name="Satoh T."/>
            <person name="Shirai Y."/>
            <person name="Takahashi Y."/>
            <person name="Nakagawa K."/>
            <person name="Okumura K."/>
            <person name="Nagase T."/>
            <person name="Nomura N."/>
            <person name="Kikuchi H."/>
            <person name="Masuho Y."/>
            <person name="Yamashita R."/>
            <person name="Nakai K."/>
            <person name="Yada T."/>
            <person name="Nakamura Y."/>
            <person name="Ohara O."/>
            <person name="Isogai T."/>
            <person name="Sugano S."/>
        </authorList>
    </citation>
    <scope>NUCLEOTIDE SEQUENCE [LARGE SCALE MRNA] (ISOFORMS 1; 3 AND 4)</scope>
    <source>
        <tissue>Mammary gland</tissue>
        <tissue>Stomach</tissue>
        <tissue>Testis</tissue>
    </source>
</reference>
<reference key="6">
    <citation type="journal article" date="2004" name="Nature">
        <title>The sequence and analysis of duplication-rich human chromosome 16.</title>
        <authorList>
            <person name="Martin J."/>
            <person name="Han C."/>
            <person name="Gordon L.A."/>
            <person name="Terry A."/>
            <person name="Prabhakar S."/>
            <person name="She X."/>
            <person name="Xie G."/>
            <person name="Hellsten U."/>
            <person name="Chan Y.M."/>
            <person name="Altherr M."/>
            <person name="Couronne O."/>
            <person name="Aerts A."/>
            <person name="Bajorek E."/>
            <person name="Black S."/>
            <person name="Blumer H."/>
            <person name="Branscomb E."/>
            <person name="Brown N.C."/>
            <person name="Bruno W.J."/>
            <person name="Buckingham J.M."/>
            <person name="Callen D.F."/>
            <person name="Campbell C.S."/>
            <person name="Campbell M.L."/>
            <person name="Campbell E.W."/>
            <person name="Caoile C."/>
            <person name="Challacombe J.F."/>
            <person name="Chasteen L.A."/>
            <person name="Chertkov O."/>
            <person name="Chi H.C."/>
            <person name="Christensen M."/>
            <person name="Clark L.M."/>
            <person name="Cohn J.D."/>
            <person name="Denys M."/>
            <person name="Detter J.C."/>
            <person name="Dickson M."/>
            <person name="Dimitrijevic-Bussod M."/>
            <person name="Escobar J."/>
            <person name="Fawcett J.J."/>
            <person name="Flowers D."/>
            <person name="Fotopulos D."/>
            <person name="Glavina T."/>
            <person name="Gomez M."/>
            <person name="Gonzales E."/>
            <person name="Goodstein D."/>
            <person name="Goodwin L.A."/>
            <person name="Grady D.L."/>
            <person name="Grigoriev I."/>
            <person name="Groza M."/>
            <person name="Hammon N."/>
            <person name="Hawkins T."/>
            <person name="Haydu L."/>
            <person name="Hildebrand C.E."/>
            <person name="Huang W."/>
            <person name="Israni S."/>
            <person name="Jett J."/>
            <person name="Jewett P.B."/>
            <person name="Kadner K."/>
            <person name="Kimball H."/>
            <person name="Kobayashi A."/>
            <person name="Krawczyk M.-C."/>
            <person name="Leyba T."/>
            <person name="Longmire J.L."/>
            <person name="Lopez F."/>
            <person name="Lou Y."/>
            <person name="Lowry S."/>
            <person name="Ludeman T."/>
            <person name="Manohar C.F."/>
            <person name="Mark G.A."/>
            <person name="McMurray K.L."/>
            <person name="Meincke L.J."/>
            <person name="Morgan J."/>
            <person name="Moyzis R.K."/>
            <person name="Mundt M.O."/>
            <person name="Munk A.C."/>
            <person name="Nandkeshwar R.D."/>
            <person name="Pitluck S."/>
            <person name="Pollard M."/>
            <person name="Predki P."/>
            <person name="Parson-Quintana B."/>
            <person name="Ramirez L."/>
            <person name="Rash S."/>
            <person name="Retterer J."/>
            <person name="Ricke D.O."/>
            <person name="Robinson D.L."/>
            <person name="Rodriguez A."/>
            <person name="Salamov A."/>
            <person name="Saunders E.H."/>
            <person name="Scott D."/>
            <person name="Shough T."/>
            <person name="Stallings R.L."/>
            <person name="Stalvey M."/>
            <person name="Sutherland R.D."/>
            <person name="Tapia R."/>
            <person name="Tesmer J.G."/>
            <person name="Thayer N."/>
            <person name="Thompson L.S."/>
            <person name="Tice H."/>
            <person name="Torney D.C."/>
            <person name="Tran-Gyamfi M."/>
            <person name="Tsai M."/>
            <person name="Ulanovsky L.E."/>
            <person name="Ustaszewska A."/>
            <person name="Vo N."/>
            <person name="White P.S."/>
            <person name="Williams A.L."/>
            <person name="Wills P.L."/>
            <person name="Wu J.-R."/>
            <person name="Wu K."/>
            <person name="Yang J."/>
            <person name="DeJong P."/>
            <person name="Bruce D."/>
            <person name="Doggett N.A."/>
            <person name="Deaven L."/>
            <person name="Schmutz J."/>
            <person name="Grimwood J."/>
            <person name="Richardson P."/>
            <person name="Rokhsar D.S."/>
            <person name="Eichler E.E."/>
            <person name="Gilna P."/>
            <person name="Lucas S.M."/>
            <person name="Myers R.M."/>
            <person name="Rubin E.M."/>
            <person name="Pennacchio L.A."/>
        </authorList>
    </citation>
    <scope>NUCLEOTIDE SEQUENCE [LARGE SCALE GENOMIC DNA]</scope>
</reference>
<reference key="7">
    <citation type="submission" date="2005-07" db="EMBL/GenBank/DDBJ databases">
        <authorList>
            <person name="Mural R.J."/>
            <person name="Istrail S."/>
            <person name="Sutton G.G."/>
            <person name="Florea L."/>
            <person name="Halpern A.L."/>
            <person name="Mobarry C.M."/>
            <person name="Lippert R."/>
            <person name="Walenz B."/>
            <person name="Shatkay H."/>
            <person name="Dew I."/>
            <person name="Miller J.R."/>
            <person name="Flanigan M.J."/>
            <person name="Edwards N.J."/>
            <person name="Bolanos R."/>
            <person name="Fasulo D."/>
            <person name="Halldorsson B.V."/>
            <person name="Hannenhalli S."/>
            <person name="Turner R."/>
            <person name="Yooseph S."/>
            <person name="Lu F."/>
            <person name="Nusskern D.R."/>
            <person name="Shue B.C."/>
            <person name="Zheng X.H."/>
            <person name="Zhong F."/>
            <person name="Delcher A.L."/>
            <person name="Huson D.H."/>
            <person name="Kravitz S.A."/>
            <person name="Mouchard L."/>
            <person name="Reinert K."/>
            <person name="Remington K.A."/>
            <person name="Clark A.G."/>
            <person name="Waterman M.S."/>
            <person name="Eichler E.E."/>
            <person name="Adams M.D."/>
            <person name="Hunkapiller M.W."/>
            <person name="Myers E.W."/>
            <person name="Venter J.C."/>
        </authorList>
    </citation>
    <scope>NUCLEOTIDE SEQUENCE [LARGE SCALE GENOMIC DNA]</scope>
</reference>
<reference key="8">
    <citation type="journal article" date="2004" name="Genome Res.">
        <title>The status, quality, and expansion of the NIH full-length cDNA project: the Mammalian Gene Collection (MGC).</title>
        <authorList>
            <consortium name="The MGC Project Team"/>
        </authorList>
    </citation>
    <scope>NUCLEOTIDE SEQUENCE [LARGE SCALE MRNA] (ISOFORMS 1 AND 3)</scope>
    <source>
        <tissue>Ovary</tissue>
        <tissue>Skin</tissue>
    </source>
</reference>
<reference key="9">
    <citation type="journal article" date="2012" name="Mol. Cell. Proteomics">
        <title>Comparative large-scale characterisation of plant vs. mammal proteins reveals similar and idiosyncratic N-alpha acetylation features.</title>
        <authorList>
            <person name="Bienvenut W.V."/>
            <person name="Sumpton D."/>
            <person name="Martinez A."/>
            <person name="Lilla S."/>
            <person name="Espagne C."/>
            <person name="Meinnel T."/>
            <person name="Giglione C."/>
        </authorList>
    </citation>
    <scope>ACETYLATION [LARGE SCALE ANALYSIS] AT ALA-2</scope>
    <scope>CLEAVAGE OF INITIATOR METHIONINE [LARGE SCALE ANALYSIS]</scope>
    <scope>IDENTIFICATION BY MASS SPECTROMETRY [LARGE SCALE ANALYSIS]</scope>
</reference>
<reference key="10">
    <citation type="journal article" date="2009" name="J. Biol. Chem.">
        <title>The DEXD/H-box RNA helicase DDX19 is regulated by an alpha-helical switch.</title>
        <authorList>
            <person name="Collins R."/>
            <person name="Karlberg T."/>
            <person name="Lehtio L."/>
            <person name="Schutz P."/>
            <person name="van den Berg S."/>
            <person name="Dahlgren L.G."/>
            <person name="Hammarstrom M."/>
            <person name="Weigelt J."/>
            <person name="Schuler H."/>
        </authorList>
    </citation>
    <scope>X-RAY CRYSTALLOGRAPHY (2.7 ANGSTROMS) OF 54-475 ALONE AND IN COMPLEX WITH RNA</scope>
    <scope>REGULATION BY N-TERMINAL HELIX DOMAIN</scope>
</reference>
<reference key="11">
    <citation type="journal article" date="2009" name="Nat. Struct. Mol. Biol.">
        <title>The mRNA export protein DBP5 binds RNA and the cytoplasmic nucleoporin NUP214 in a mutually exclusive manner.</title>
        <authorList>
            <person name="von Moeller H."/>
            <person name="Basquin C."/>
            <person name="Conti E."/>
        </authorList>
    </citation>
    <scope>X-RAY CRYSTALLOGRAPHY (2.2 ANGSTROMS) OF 68-479 IN COMPLEX WITH NUP214 AND ATP ANALOG</scope>
    <scope>ATP-BINDING SITES</scope>
    <scope>MUTAGENESIS OF ASP-223; ILE-258; ARG-259 AND ARG-262</scope>
</reference>
<reference key="12">
    <citation type="journal article" date="2009" name="Proc. Natl. Acad. Sci. U.S.A.">
        <title>Structural and functional analysis of the interaction between the nucleoporin Nup214 and the DEAD-box helicase Ddx19.</title>
        <authorList>
            <person name="Napetschnig J."/>
            <person name="Kassube S.A."/>
            <person name="Debler E.W."/>
            <person name="Wong R.W."/>
            <person name="Blobel G."/>
            <person name="Hoelz A."/>
        </authorList>
    </citation>
    <scope>X-RAY CRYSTALLOGRAPHY (2.51 ANGSTROMS) OF 1-300 IN COMPLEX WITH NUP214 AND ADP</scope>
</reference>
<name>DD19B_HUMAN</name>
<keyword id="KW-0002">3D-structure</keyword>
<keyword id="KW-0007">Acetylation</keyword>
<keyword id="KW-0025">Alternative splicing</keyword>
<keyword id="KW-0067">ATP-binding</keyword>
<keyword id="KW-0963">Cytoplasm</keyword>
<keyword id="KW-0347">Helicase</keyword>
<keyword id="KW-0378">Hydrolase</keyword>
<keyword id="KW-0547">Nucleotide-binding</keyword>
<keyword id="KW-0539">Nucleus</keyword>
<keyword id="KW-1267">Proteomics identification</keyword>
<keyword id="KW-1185">Reference proteome</keyword>
<keyword id="KW-0694">RNA-binding</keyword>
<comment type="function">
    <text evidence="4">ATP-dependent RNA helicase involved in mRNA export from the nucleus (PubMed:10428971). Rather than unwinding RNA duplexes, DDX19B functions as a remodeler of ribonucleoprotein particles, whereby proteins bound to nuclear mRNA are dissociated and replaced by cytoplasmic mRNA binding proteins (PubMed:10428971).</text>
</comment>
<comment type="catalytic activity">
    <reaction evidence="4">
        <text>ATP + H2O = ADP + phosphate + H(+)</text>
        <dbReference type="Rhea" id="RHEA:13065"/>
        <dbReference type="ChEBI" id="CHEBI:15377"/>
        <dbReference type="ChEBI" id="CHEBI:15378"/>
        <dbReference type="ChEBI" id="CHEBI:30616"/>
        <dbReference type="ChEBI" id="CHEBI:43474"/>
        <dbReference type="ChEBI" id="CHEBI:456216"/>
        <dbReference type="EC" id="3.6.4.13"/>
    </reaction>
</comment>
<comment type="subunit">
    <text evidence="4 5 6 7">Associates with the nuclear pore complex via interaction with NUP214 (PubMed:10428971, PubMed:19208808, PubMed:19219046). Interacts with NUP214 or RNA in a mutually exclusive manner (PubMed:19208808, PubMed:19219046, PubMed:19244245).</text>
</comment>
<comment type="interaction">
    <interactant intactId="EBI-719232">
        <id>Q9UMR2</id>
    </interactant>
    <interactant intactId="EBI-78219">
        <id>P45973</id>
        <label>CBX5</label>
    </interactant>
    <organismsDiffer>false</organismsDiffer>
    <experiments>3</experiments>
</comment>
<comment type="interaction">
    <interactant intactId="EBI-719232">
        <id>Q9UMR2</id>
    </interactant>
    <interactant intactId="EBI-12180013">
        <id>O43310-2</id>
        <label>CTIF</label>
    </interactant>
    <organismsDiffer>false</organismsDiffer>
    <experiments>3</experiments>
</comment>
<comment type="interaction">
    <interactant intactId="EBI-719232">
        <id>Q9UMR2</id>
    </interactant>
    <interactant intactId="EBI-373498">
        <id>A9UHW6</id>
        <label>MIF4GD</label>
    </interactant>
    <organismsDiffer>false</organismsDiffer>
    <experiments>13</experiments>
</comment>
<comment type="interaction">
    <interactant intactId="EBI-719232">
        <id>Q9UMR2</id>
    </interactant>
    <interactant intactId="EBI-9118295">
        <id>A9UHW6-2</id>
        <label>MIF4GD</label>
    </interactant>
    <organismsDiffer>false</organismsDiffer>
    <experiments>6</experiments>
</comment>
<comment type="interaction">
    <interactant intactId="EBI-719232">
        <id>Q9UMR2</id>
    </interactant>
    <interactant intactId="EBI-710997">
        <id>P54274</id>
        <label>TERF1</label>
    </interactant>
    <organismsDiffer>false</organismsDiffer>
    <experiments>2</experiments>
</comment>
<comment type="interaction">
    <interactant intactId="EBI-719232">
        <id>Q9UMR2</id>
    </interactant>
    <interactant intactId="EBI-296151">
        <id>P37173</id>
        <label>TGFBR2</label>
    </interactant>
    <organismsDiffer>false</organismsDiffer>
    <experiments>3</experiments>
</comment>
<comment type="interaction">
    <interactant intactId="EBI-5773937">
        <id>Q9UMR2-1</id>
    </interactant>
    <interactant intactId="EBI-15757000">
        <id>P35658-1</id>
        <label>NUP214</label>
    </interactant>
    <organismsDiffer>false</organismsDiffer>
    <experiments>9</experiments>
</comment>
<comment type="subcellular location">
    <subcellularLocation>
        <location evidence="4">Cytoplasm</location>
    </subcellularLocation>
    <subcellularLocation>
        <location evidence="4">Nucleus</location>
        <location evidence="4">Nucleoplasm</location>
    </subcellularLocation>
    <text evidence="4">Associates with the nuclear pore complex cytoplasmic fibrils.</text>
</comment>
<comment type="alternative products">
    <event type="alternative splicing"/>
    <isoform>
        <id>Q9UMR2-1</id>
        <name>1</name>
        <sequence type="displayed"/>
    </isoform>
    <isoform>
        <id>Q9UMR2-2</id>
        <name>2</name>
        <sequence type="described" ref="VSP_015239"/>
    </isoform>
    <isoform>
        <id>Q9UMR2-3</id>
        <name>3</name>
        <sequence type="described" ref="VSP_041347"/>
    </isoform>
    <isoform>
        <id>Q9UMR2-4</id>
        <name>4</name>
        <sequence type="described" ref="VSP_044727 VSP_015239"/>
    </isoform>
</comment>
<comment type="domain">
    <text>The N-terminal extension helix acts as an autoinhibitory domain, preventing ATP hydrolysis, unless the N-terminus of the protein is displaced by RNA binding, allowing cleft closure to bring key side chains into position for catalysis.</text>
</comment>
<comment type="similarity">
    <text evidence="13">Belongs to the DEAD box helicase family. DDX19/DBP5 subfamily.</text>
</comment>
<organism>
    <name type="scientific">Homo sapiens</name>
    <name type="common">Human</name>
    <dbReference type="NCBI Taxonomy" id="9606"/>
    <lineage>
        <taxon>Eukaryota</taxon>
        <taxon>Metazoa</taxon>
        <taxon>Chordata</taxon>
        <taxon>Craniata</taxon>
        <taxon>Vertebrata</taxon>
        <taxon>Euteleostomi</taxon>
        <taxon>Mammalia</taxon>
        <taxon>Eutheria</taxon>
        <taxon>Euarchontoglires</taxon>
        <taxon>Primates</taxon>
        <taxon>Haplorrhini</taxon>
        <taxon>Catarrhini</taxon>
        <taxon>Hominidae</taxon>
        <taxon>Homo</taxon>
    </lineage>
</organism>
<accession>Q9UMR2</accession>
<accession>B3KNE9</accession>
<accession>B4DXS6</accession>
<accession>E7EMK4</accession>
<accession>Q6FIB7</accession>
<accession>Q6IAE0</accession>
<accession>Q96KE7</accession>
<accession>Q9H0U0</accession>
<gene>
    <name type="primary">DDX19B</name>
    <name type="synonym">DBP5</name>
    <name type="synonym">DDX19</name>
    <name type="synonym">TDBP</name>
</gene>
<dbReference type="EC" id="3.6.4.13" evidence="4"/>
<dbReference type="EMBL" id="AJ237946">
    <property type="protein sequence ID" value="CAB52189.1"/>
    <property type="molecule type" value="mRNA"/>
</dbReference>
<dbReference type="EMBL" id="AF353720">
    <property type="protein sequence ID" value="AAK40102.1"/>
    <property type="molecule type" value="mRNA"/>
</dbReference>
<dbReference type="EMBL" id="AL136639">
    <property type="protein sequence ID" value="CAB66574.1"/>
    <property type="molecule type" value="mRNA"/>
</dbReference>
<dbReference type="EMBL" id="CR457215">
    <property type="protein sequence ID" value="CAG33496.1"/>
    <property type="molecule type" value="mRNA"/>
</dbReference>
<dbReference type="EMBL" id="CR533509">
    <property type="protein sequence ID" value="CAG38540.1"/>
    <property type="molecule type" value="mRNA"/>
</dbReference>
<dbReference type="EMBL" id="AK027378">
    <property type="protein sequence ID" value="BAG51311.1"/>
    <property type="molecule type" value="mRNA"/>
</dbReference>
<dbReference type="EMBL" id="AK301938">
    <property type="protein sequence ID" value="BAG63358.1"/>
    <property type="molecule type" value="mRNA"/>
</dbReference>
<dbReference type="EMBL" id="AK302107">
    <property type="protein sequence ID" value="BAG63488.1"/>
    <property type="molecule type" value="mRNA"/>
</dbReference>
<dbReference type="EMBL" id="AK316346">
    <property type="protein sequence ID" value="BAH14717.1"/>
    <property type="molecule type" value="mRNA"/>
</dbReference>
<dbReference type="EMBL" id="AC012184">
    <property type="status" value="NOT_ANNOTATED_CDS"/>
    <property type="molecule type" value="Genomic_DNA"/>
</dbReference>
<dbReference type="EMBL" id="CH471241">
    <property type="protein sequence ID" value="EAW51827.1"/>
    <property type="molecule type" value="Genomic_DNA"/>
</dbReference>
<dbReference type="EMBL" id="CH471241">
    <property type="protein sequence ID" value="EAW51831.1"/>
    <property type="molecule type" value="Genomic_DNA"/>
</dbReference>
<dbReference type="EMBL" id="CH471241">
    <property type="protein sequence ID" value="EAW51832.1"/>
    <property type="molecule type" value="Genomic_DNA"/>
</dbReference>
<dbReference type="EMBL" id="CH471241">
    <property type="protein sequence ID" value="EAW51834.1"/>
    <property type="molecule type" value="Genomic_DNA"/>
</dbReference>
<dbReference type="EMBL" id="BC003626">
    <property type="protein sequence ID" value="AAH03626.1"/>
    <property type="molecule type" value="mRNA"/>
</dbReference>
<dbReference type="EMBL" id="BC010008">
    <property type="protein sequence ID" value="AAH10008.1"/>
    <property type="molecule type" value="mRNA"/>
</dbReference>
<dbReference type="CCDS" id="CCDS10888.1">
    <molecule id="Q9UMR2-1"/>
</dbReference>
<dbReference type="CCDS" id="CCDS32475.1">
    <molecule id="Q9UMR2-2"/>
</dbReference>
<dbReference type="CCDS" id="CCDS42187.1">
    <molecule id="Q9UMR2-3"/>
</dbReference>
<dbReference type="CCDS" id="CCDS58478.1">
    <molecule id="Q9UMR2-4"/>
</dbReference>
<dbReference type="RefSeq" id="NP_001014449.1">
    <molecule id="Q9UMR2-3"/>
    <property type="nucleotide sequence ID" value="NM_001014449.3"/>
</dbReference>
<dbReference type="RefSeq" id="NP_001014451.1">
    <molecule id="Q9UMR2-2"/>
    <property type="nucleotide sequence ID" value="NM_001014451.3"/>
</dbReference>
<dbReference type="RefSeq" id="NP_001244101.1">
    <molecule id="Q9UMR2-4"/>
    <property type="nucleotide sequence ID" value="NM_001257172.2"/>
</dbReference>
<dbReference type="RefSeq" id="NP_001244102.1">
    <molecule id="Q9UMR2-3"/>
    <property type="nucleotide sequence ID" value="NM_001257173.2"/>
</dbReference>
<dbReference type="RefSeq" id="NP_001244103.1">
    <molecule id="Q9UMR2-3"/>
    <property type="nucleotide sequence ID" value="NM_001257174.2"/>
</dbReference>
<dbReference type="RefSeq" id="NP_009173.1">
    <molecule id="Q9UMR2-1"/>
    <property type="nucleotide sequence ID" value="NM_007242.7"/>
</dbReference>
<dbReference type="RefSeq" id="XP_006721190.1">
    <property type="nucleotide sequence ID" value="XM_006721127.2"/>
</dbReference>
<dbReference type="RefSeq" id="XP_016878379.1">
    <property type="nucleotide sequence ID" value="XM_017022890.1"/>
</dbReference>
<dbReference type="PDB" id="3EWS">
    <property type="method" value="X-ray"/>
    <property type="resolution" value="2.70 A"/>
    <property type="chains" value="A/B=54-475"/>
</dbReference>
<dbReference type="PDB" id="3FHC">
    <property type="method" value="X-ray"/>
    <property type="resolution" value="2.80 A"/>
    <property type="chains" value="B=68-302"/>
</dbReference>
<dbReference type="PDB" id="3FHT">
    <property type="method" value="X-ray"/>
    <property type="resolution" value="2.20 A"/>
    <property type="chains" value="A/B=68-479"/>
</dbReference>
<dbReference type="PDB" id="3FMO">
    <property type="method" value="X-ray"/>
    <property type="resolution" value="2.51 A"/>
    <property type="chains" value="B=1-300"/>
</dbReference>
<dbReference type="PDB" id="3FMP">
    <property type="method" value="X-ray"/>
    <property type="resolution" value="3.19 A"/>
    <property type="chains" value="B/D=1-479"/>
</dbReference>
<dbReference type="PDB" id="3G0H">
    <property type="method" value="X-ray"/>
    <property type="resolution" value="2.70 A"/>
    <property type="chains" value="A=54-475"/>
</dbReference>
<dbReference type="PDB" id="6B4I">
    <property type="method" value="X-ray"/>
    <property type="resolution" value="3.62 A"/>
    <property type="chains" value="E/F=54-479"/>
</dbReference>
<dbReference type="PDB" id="6B4J">
    <property type="method" value="X-ray"/>
    <property type="resolution" value="3.40 A"/>
    <property type="chains" value="E/F=54-479"/>
</dbReference>
<dbReference type="PDB" id="6B4K">
    <property type="method" value="X-ray"/>
    <property type="resolution" value="2.20 A"/>
    <property type="chains" value="A/B=54-479"/>
</dbReference>
<dbReference type="PDBsum" id="3EWS"/>
<dbReference type="PDBsum" id="3FHC"/>
<dbReference type="PDBsum" id="3FHT"/>
<dbReference type="PDBsum" id="3FMO"/>
<dbReference type="PDBsum" id="3FMP"/>
<dbReference type="PDBsum" id="3G0H"/>
<dbReference type="PDBsum" id="6B4I"/>
<dbReference type="PDBsum" id="6B4J"/>
<dbReference type="PDBsum" id="6B4K"/>
<dbReference type="SMR" id="Q9UMR2"/>
<dbReference type="BioGRID" id="116426">
    <property type="interactions" value="321"/>
</dbReference>
<dbReference type="DIP" id="DIP-48486N"/>
<dbReference type="FunCoup" id="Q9UMR2">
    <property type="interactions" value="2419"/>
</dbReference>
<dbReference type="IntAct" id="Q9UMR2">
    <property type="interactions" value="206"/>
</dbReference>
<dbReference type="MINT" id="Q9UMR2"/>
<dbReference type="STRING" id="9606.ENSP00000399208"/>
<dbReference type="TCDB" id="1.I.1.1.3">
    <property type="family name" value="the nuclear pore complex (npc) family"/>
</dbReference>
<dbReference type="GlyGen" id="Q9UMR2">
    <property type="glycosylation" value="2 sites, 1 O-linked glycan (1 site)"/>
</dbReference>
<dbReference type="iPTMnet" id="Q9UMR2"/>
<dbReference type="PhosphoSitePlus" id="Q9UMR2"/>
<dbReference type="BioMuta" id="DDX19B"/>
<dbReference type="DMDM" id="10719979"/>
<dbReference type="jPOST" id="Q9UMR2"/>
<dbReference type="MassIVE" id="Q9UMR2"/>
<dbReference type="PaxDb" id="9606-ENSP00000288071"/>
<dbReference type="PeptideAtlas" id="Q9UMR2"/>
<dbReference type="ProteomicsDB" id="16960"/>
<dbReference type="ProteomicsDB" id="85194">
    <molecule id="Q9UMR2-1"/>
</dbReference>
<dbReference type="ProteomicsDB" id="85195">
    <molecule id="Q9UMR2-2"/>
</dbReference>
<dbReference type="ProteomicsDB" id="85196">
    <molecule id="Q9UMR2-3"/>
</dbReference>
<dbReference type="Pumba" id="Q9UMR2"/>
<dbReference type="Antibodypedia" id="16335">
    <property type="antibodies" value="325 antibodies from 35 providers"/>
</dbReference>
<dbReference type="DNASU" id="11269"/>
<dbReference type="Ensembl" id="ENST00000288071.11">
    <molecule id="Q9UMR2-1"/>
    <property type="protein sequence ID" value="ENSP00000288071.7"/>
    <property type="gene ID" value="ENSG00000157349.17"/>
</dbReference>
<dbReference type="Ensembl" id="ENST00000355992.7">
    <molecule id="Q9UMR2-2"/>
    <property type="protein sequence ID" value="ENSP00000348271.3"/>
    <property type="gene ID" value="ENSG00000157349.17"/>
</dbReference>
<dbReference type="Ensembl" id="ENST00000393657.6">
    <molecule id="Q9UMR2-3"/>
    <property type="protein sequence ID" value="ENSP00000377267.2"/>
    <property type="gene ID" value="ENSG00000157349.17"/>
</dbReference>
<dbReference type="Ensembl" id="ENST00000451014.7">
    <molecule id="Q9UMR2-4"/>
    <property type="protein sequence ID" value="ENSP00000392639.3"/>
    <property type="gene ID" value="ENSG00000157349.17"/>
</dbReference>
<dbReference type="Ensembl" id="ENST00000563392.5">
    <molecule id="Q9UMR2-3"/>
    <property type="protein sequence ID" value="ENSP00000456574.1"/>
    <property type="gene ID" value="ENSG00000157349.17"/>
</dbReference>
<dbReference type="Ensembl" id="ENST00000568625.5">
    <molecule id="Q9UMR2-3"/>
    <property type="protein sequence ID" value="ENSP00000456757.1"/>
    <property type="gene ID" value="ENSG00000157349.17"/>
</dbReference>
<dbReference type="GeneID" id="11269"/>
<dbReference type="KEGG" id="hsa:11269"/>
<dbReference type="MANE-Select" id="ENST00000288071.11">
    <property type="protein sequence ID" value="ENSP00000288071.7"/>
    <property type="RefSeq nucleotide sequence ID" value="NM_007242.7"/>
    <property type="RefSeq protein sequence ID" value="NP_009173.1"/>
</dbReference>
<dbReference type="UCSC" id="uc002eyo.5">
    <molecule id="Q9UMR2-1"/>
    <property type="organism name" value="human"/>
</dbReference>
<dbReference type="AGR" id="HGNC:2742"/>
<dbReference type="CTD" id="11269"/>
<dbReference type="DisGeNET" id="11269"/>
<dbReference type="GeneCards" id="DDX19B"/>
<dbReference type="HGNC" id="HGNC:2742">
    <property type="gene designation" value="DDX19B"/>
</dbReference>
<dbReference type="HPA" id="ENSG00000157349">
    <property type="expression patterns" value="Low tissue specificity"/>
</dbReference>
<dbReference type="MIM" id="605812">
    <property type="type" value="gene"/>
</dbReference>
<dbReference type="neXtProt" id="NX_Q9UMR2"/>
<dbReference type="OpenTargets" id="ENSG00000157349"/>
<dbReference type="PharmGKB" id="PA27208"/>
<dbReference type="VEuPathDB" id="HostDB:ENSG00000157349"/>
<dbReference type="eggNOG" id="KOG0332">
    <property type="taxonomic scope" value="Eukaryota"/>
</dbReference>
<dbReference type="GeneTree" id="ENSGT00940000154417"/>
<dbReference type="HOGENOM" id="CLU_003041_1_0_1"/>
<dbReference type="InParanoid" id="Q9UMR2"/>
<dbReference type="OMA" id="IAAETRW"/>
<dbReference type="OrthoDB" id="10265785at2759"/>
<dbReference type="PAN-GO" id="Q9UMR2">
    <property type="GO annotations" value="5 GO annotations based on evolutionary models"/>
</dbReference>
<dbReference type="PhylomeDB" id="Q9UMR2"/>
<dbReference type="TreeFam" id="TF314957"/>
<dbReference type="BRENDA" id="3.6.4.13">
    <property type="organism ID" value="2681"/>
</dbReference>
<dbReference type="PathwayCommons" id="Q9UMR2"/>
<dbReference type="SignaLink" id="Q9UMR2"/>
<dbReference type="BioGRID-ORCS" id="11269">
    <property type="hits" value="196 hits in 1159 CRISPR screens"/>
</dbReference>
<dbReference type="ChiTaRS" id="DDX19B">
    <property type="organism name" value="human"/>
</dbReference>
<dbReference type="EvolutionaryTrace" id="Q9UMR2"/>
<dbReference type="GeneWiki" id="DDX19B"/>
<dbReference type="GenomeRNAi" id="11269"/>
<dbReference type="Pharos" id="Q9UMR2">
    <property type="development level" value="Tbio"/>
</dbReference>
<dbReference type="PRO" id="PR:Q9UMR2"/>
<dbReference type="Proteomes" id="UP000005640">
    <property type="component" value="Chromosome 16"/>
</dbReference>
<dbReference type="RNAct" id="Q9UMR2">
    <property type="molecule type" value="protein"/>
</dbReference>
<dbReference type="Bgee" id="ENSG00000157349">
    <property type="expression patterns" value="Expressed in left testis and 122 other cell types or tissues"/>
</dbReference>
<dbReference type="ExpressionAtlas" id="Q9UMR2">
    <property type="expression patterns" value="baseline and differential"/>
</dbReference>
<dbReference type="GO" id="GO:0005737">
    <property type="term" value="C:cytoplasm"/>
    <property type="evidence" value="ECO:0000304"/>
    <property type="project" value="ProtInc"/>
</dbReference>
<dbReference type="GO" id="GO:0010494">
    <property type="term" value="C:cytoplasmic stress granule"/>
    <property type="evidence" value="ECO:0000318"/>
    <property type="project" value="GO_Central"/>
</dbReference>
<dbReference type="GO" id="GO:0070062">
    <property type="term" value="C:extracellular exosome"/>
    <property type="evidence" value="ECO:0007005"/>
    <property type="project" value="UniProtKB"/>
</dbReference>
<dbReference type="GO" id="GO:0016020">
    <property type="term" value="C:membrane"/>
    <property type="evidence" value="ECO:0007005"/>
    <property type="project" value="UniProtKB"/>
</dbReference>
<dbReference type="GO" id="GO:0005635">
    <property type="term" value="C:nuclear envelope"/>
    <property type="evidence" value="ECO:0000314"/>
    <property type="project" value="UniProtKB"/>
</dbReference>
<dbReference type="GO" id="GO:0005643">
    <property type="term" value="C:nuclear pore"/>
    <property type="evidence" value="ECO:0000304"/>
    <property type="project" value="ProtInc"/>
</dbReference>
<dbReference type="GO" id="GO:0005654">
    <property type="term" value="C:nucleoplasm"/>
    <property type="evidence" value="ECO:0007669"/>
    <property type="project" value="UniProtKB-SubCell"/>
</dbReference>
<dbReference type="GO" id="GO:0005634">
    <property type="term" value="C:nucleus"/>
    <property type="evidence" value="ECO:0000318"/>
    <property type="project" value="GO_Central"/>
</dbReference>
<dbReference type="GO" id="GO:0005524">
    <property type="term" value="F:ATP binding"/>
    <property type="evidence" value="ECO:0007669"/>
    <property type="project" value="UniProtKB-KW"/>
</dbReference>
<dbReference type="GO" id="GO:0016887">
    <property type="term" value="F:ATP hydrolysis activity"/>
    <property type="evidence" value="ECO:0007669"/>
    <property type="project" value="RHEA"/>
</dbReference>
<dbReference type="GO" id="GO:0004386">
    <property type="term" value="F:helicase activity"/>
    <property type="evidence" value="ECO:0000304"/>
    <property type="project" value="ProtInc"/>
</dbReference>
<dbReference type="GO" id="GO:0003729">
    <property type="term" value="F:mRNA binding"/>
    <property type="evidence" value="ECO:0000318"/>
    <property type="project" value="GO_Central"/>
</dbReference>
<dbReference type="GO" id="GO:0003723">
    <property type="term" value="F:RNA binding"/>
    <property type="evidence" value="ECO:0000304"/>
    <property type="project" value="ProtInc"/>
</dbReference>
<dbReference type="GO" id="GO:0003724">
    <property type="term" value="F:RNA helicase activity"/>
    <property type="evidence" value="ECO:0000318"/>
    <property type="project" value="GO_Central"/>
</dbReference>
<dbReference type="GO" id="GO:0006406">
    <property type="term" value="P:mRNA export from nucleus"/>
    <property type="evidence" value="ECO:0000304"/>
    <property type="project" value="ProtInc"/>
</dbReference>
<dbReference type="GO" id="GO:0016973">
    <property type="term" value="P:poly(A)+ mRNA export from nucleus"/>
    <property type="evidence" value="ECO:0000318"/>
    <property type="project" value="GO_Central"/>
</dbReference>
<dbReference type="CDD" id="cd18787">
    <property type="entry name" value="SF2_C_DEAD"/>
    <property type="match status" value="1"/>
</dbReference>
<dbReference type="DisProt" id="DP01560"/>
<dbReference type="FunFam" id="3.40.50.300:FF:000318">
    <property type="entry name" value="ATP-dependent RNA helicase DDX19B"/>
    <property type="match status" value="1"/>
</dbReference>
<dbReference type="FunFam" id="3.40.50.300:FF:000357">
    <property type="entry name" value="ATP-dependent RNA helicase DDX19B"/>
    <property type="match status" value="1"/>
</dbReference>
<dbReference type="Gene3D" id="6.10.250.2170">
    <property type="match status" value="1"/>
</dbReference>
<dbReference type="Gene3D" id="3.40.50.300">
    <property type="entry name" value="P-loop containing nucleotide triphosphate hydrolases"/>
    <property type="match status" value="2"/>
</dbReference>
<dbReference type="InterPro" id="IPR011545">
    <property type="entry name" value="DEAD/DEAH_box_helicase_dom"/>
</dbReference>
<dbReference type="InterPro" id="IPR014001">
    <property type="entry name" value="Helicase_ATP-bd"/>
</dbReference>
<dbReference type="InterPro" id="IPR001650">
    <property type="entry name" value="Helicase_C-like"/>
</dbReference>
<dbReference type="InterPro" id="IPR027417">
    <property type="entry name" value="P-loop_NTPase"/>
</dbReference>
<dbReference type="InterPro" id="IPR014014">
    <property type="entry name" value="RNA_helicase_DEAD_Q_motif"/>
</dbReference>
<dbReference type="PANTHER" id="PTHR47958">
    <property type="entry name" value="ATP-DEPENDENT RNA HELICASE DBP3"/>
    <property type="match status" value="1"/>
</dbReference>
<dbReference type="Pfam" id="PF00270">
    <property type="entry name" value="DEAD"/>
    <property type="match status" value="1"/>
</dbReference>
<dbReference type="Pfam" id="PF00271">
    <property type="entry name" value="Helicase_C"/>
    <property type="match status" value="1"/>
</dbReference>
<dbReference type="SMART" id="SM00487">
    <property type="entry name" value="DEXDc"/>
    <property type="match status" value="1"/>
</dbReference>
<dbReference type="SMART" id="SM00490">
    <property type="entry name" value="HELICc"/>
    <property type="match status" value="1"/>
</dbReference>
<dbReference type="SUPFAM" id="SSF52540">
    <property type="entry name" value="P-loop containing nucleoside triphosphate hydrolases"/>
    <property type="match status" value="1"/>
</dbReference>
<dbReference type="PROSITE" id="PS51192">
    <property type="entry name" value="HELICASE_ATP_BIND_1"/>
    <property type="match status" value="1"/>
</dbReference>
<dbReference type="PROSITE" id="PS51194">
    <property type="entry name" value="HELICASE_CTER"/>
    <property type="match status" value="1"/>
</dbReference>
<dbReference type="PROSITE" id="PS51195">
    <property type="entry name" value="Q_MOTIF"/>
    <property type="match status" value="1"/>
</dbReference>